<name>PUBC_SHESM</name>
<reference key="1">
    <citation type="submission" date="2006-08" db="EMBL/GenBank/DDBJ databases">
        <title>Complete sequence of Shewanella sp. MR-4.</title>
        <authorList>
            <consortium name="US DOE Joint Genome Institute"/>
            <person name="Copeland A."/>
            <person name="Lucas S."/>
            <person name="Lapidus A."/>
            <person name="Barry K."/>
            <person name="Detter J.C."/>
            <person name="Glavina del Rio T."/>
            <person name="Hammon N."/>
            <person name="Israni S."/>
            <person name="Dalin E."/>
            <person name="Tice H."/>
            <person name="Pitluck S."/>
            <person name="Kiss H."/>
            <person name="Brettin T."/>
            <person name="Bruce D."/>
            <person name="Han C."/>
            <person name="Tapia R."/>
            <person name="Gilna P."/>
            <person name="Schmutz J."/>
            <person name="Larimer F."/>
            <person name="Land M."/>
            <person name="Hauser L."/>
            <person name="Kyrpides N."/>
            <person name="Mikhailova N."/>
            <person name="Nealson K."/>
            <person name="Konstantinidis K."/>
            <person name="Klappenbach J."/>
            <person name="Tiedje J."/>
            <person name="Richardson P."/>
        </authorList>
    </citation>
    <scope>NUCLEOTIDE SEQUENCE [LARGE SCALE GENOMIC DNA]</scope>
    <source>
        <strain>MR-4</strain>
    </source>
</reference>
<reference key="2">
    <citation type="journal article" date="2008" name="J. Am. Chem. Soc.">
        <title>Identification of a gene cluster that directs putrebactin biosynthesis in Shewanella species: PubC catalyzes cyclodimerization of N-hydroxy-N-succinylputrescine.</title>
        <authorList>
            <person name="Kadi N."/>
            <person name="Arbache S."/>
            <person name="Song L."/>
            <person name="Oves-Costales D."/>
            <person name="Challis G.L."/>
        </authorList>
    </citation>
    <scope>FUNCTION</scope>
    <scope>CATALYTIC ACTIVITY</scope>
    <scope>REACTION MECHANISM</scope>
    <scope>ACTIVITY REGULATION</scope>
    <scope>PATHWAY</scope>
    <scope>SUBUNIT</scope>
    <source>
        <strain>MR-4</strain>
    </source>
</reference>
<proteinExistence type="evidence at protein level"/>
<dbReference type="EC" id="6.3.2.63" evidence="1"/>
<dbReference type="EMBL" id="CP000446">
    <property type="protein sequence ID" value="ABI38530.1"/>
    <property type="molecule type" value="Genomic_DNA"/>
</dbReference>
<dbReference type="RefSeq" id="WP_011622234.1">
    <property type="nucleotide sequence ID" value="NC_008321.1"/>
</dbReference>
<dbReference type="SMR" id="P0DXD6"/>
<dbReference type="KEGG" id="she:Shewmr4_1452"/>
<dbReference type="GO" id="GO:0016881">
    <property type="term" value="F:acid-amino acid ligase activity"/>
    <property type="evidence" value="ECO:0007669"/>
    <property type="project" value="UniProtKB-ARBA"/>
</dbReference>
<dbReference type="GO" id="GO:0005524">
    <property type="term" value="F:ATP binding"/>
    <property type="evidence" value="ECO:0007669"/>
    <property type="project" value="UniProtKB-KW"/>
</dbReference>
<dbReference type="GO" id="GO:0019290">
    <property type="term" value="P:siderophore biosynthetic process"/>
    <property type="evidence" value="ECO:0007669"/>
    <property type="project" value="InterPro"/>
</dbReference>
<dbReference type="Gene3D" id="1.10.510.40">
    <property type="match status" value="1"/>
</dbReference>
<dbReference type="Gene3D" id="3.30.310.280">
    <property type="match status" value="1"/>
</dbReference>
<dbReference type="Gene3D" id="6.10.250.3370">
    <property type="match status" value="1"/>
</dbReference>
<dbReference type="InterPro" id="IPR007310">
    <property type="entry name" value="Aerobactin_biosyn_IucA/IucC_N"/>
</dbReference>
<dbReference type="InterPro" id="IPR022770">
    <property type="entry name" value="IucA/IucC-like_C"/>
</dbReference>
<dbReference type="InterPro" id="IPR037455">
    <property type="entry name" value="LucA/IucC-like"/>
</dbReference>
<dbReference type="PANTHER" id="PTHR34384">
    <property type="entry name" value="L-2,3-DIAMINOPROPANOATE--CITRATE LIGASE"/>
    <property type="match status" value="1"/>
</dbReference>
<dbReference type="PANTHER" id="PTHR34384:SF6">
    <property type="entry name" value="STAPHYLOFERRIN B SYNTHASE"/>
    <property type="match status" value="1"/>
</dbReference>
<dbReference type="Pfam" id="PF06276">
    <property type="entry name" value="FhuF"/>
    <property type="match status" value="1"/>
</dbReference>
<dbReference type="Pfam" id="PF04183">
    <property type="entry name" value="IucA_IucC"/>
    <property type="match status" value="1"/>
</dbReference>
<comment type="function">
    <text evidence="1">Ligase involved in the biosynthesis of the siderophore putrebactin (PubMed:18630910). Catalyzes the ATP-dependent head-to-tail dimerization of N-hydroxy-N-succinyl-putrescine (HSP) to give pre-putrebactin and subsequent macrocyclization of pre-putrebactin to give putrebactin (PubMed:18630910).</text>
</comment>
<comment type="catalytic activity">
    <reaction evidence="1">
        <text>2 N-(3-carboxypropanoyl)-N-hydroxyputrescine + 2 ATP = putrebactin + 2 AMP + 2 diphosphate + 2 H(+)</text>
        <dbReference type="Rhea" id="RHEA:79279"/>
        <dbReference type="ChEBI" id="CHEBI:15378"/>
        <dbReference type="ChEBI" id="CHEBI:30616"/>
        <dbReference type="ChEBI" id="CHEBI:33019"/>
        <dbReference type="ChEBI" id="CHEBI:50432"/>
        <dbReference type="ChEBI" id="CHEBI:229776"/>
        <dbReference type="ChEBI" id="CHEBI:456215"/>
        <dbReference type="EC" id="6.3.2.63"/>
    </reaction>
    <physiologicalReaction direction="left-to-right" evidence="1">
        <dbReference type="Rhea" id="RHEA:79280"/>
    </physiologicalReaction>
</comment>
<comment type="catalytic activity">
    <reaction evidence="1">
        <text>2 N-(3-carboxypropanoyl)-N-hydroxyputrescine + ATP = pre-putrebactin + AMP + diphosphate + H(+)</text>
        <dbReference type="Rhea" id="RHEA:79283"/>
        <dbReference type="ChEBI" id="CHEBI:15378"/>
        <dbReference type="ChEBI" id="CHEBI:30616"/>
        <dbReference type="ChEBI" id="CHEBI:33019"/>
        <dbReference type="ChEBI" id="CHEBI:229776"/>
        <dbReference type="ChEBI" id="CHEBI:229777"/>
        <dbReference type="ChEBI" id="CHEBI:456215"/>
    </reaction>
    <physiologicalReaction direction="left-to-right" evidence="1">
        <dbReference type="Rhea" id="RHEA:79284"/>
    </physiologicalReaction>
</comment>
<comment type="catalytic activity">
    <reaction evidence="1">
        <text>pre-putrebactin + ATP = putrebactin + AMP + diphosphate + H(+)</text>
        <dbReference type="Rhea" id="RHEA:79287"/>
        <dbReference type="ChEBI" id="CHEBI:15378"/>
        <dbReference type="ChEBI" id="CHEBI:30616"/>
        <dbReference type="ChEBI" id="CHEBI:33019"/>
        <dbReference type="ChEBI" id="CHEBI:50432"/>
        <dbReference type="ChEBI" id="CHEBI:229777"/>
        <dbReference type="ChEBI" id="CHEBI:456215"/>
    </reaction>
    <physiologicalReaction direction="left-to-right" evidence="1">
        <dbReference type="Rhea" id="RHEA:79288"/>
    </physiologicalReaction>
</comment>
<comment type="activity regulation">
    <text evidence="1">Requires Mg(2+) for activity.</text>
</comment>
<comment type="pathway">
    <text evidence="1">Siderophore biosynthesis.</text>
</comment>
<comment type="subunit">
    <text evidence="1">Homodimer.</text>
</comment>
<comment type="similarity">
    <text evidence="3">Belongs to the IucA/IucC family.</text>
</comment>
<protein>
    <recommendedName>
        <fullName evidence="3">Putrebactin synthase</fullName>
        <ecNumber evidence="1">6.3.2.63</ecNumber>
    </recommendedName>
    <alternativeName>
        <fullName evidence="3">Putrebactin siderophore biosynthesis protein PubC</fullName>
    </alternativeName>
</protein>
<organism>
    <name type="scientific">Shewanella sp. (strain MR-4)</name>
    <dbReference type="NCBI Taxonomy" id="60480"/>
    <lineage>
        <taxon>Bacteria</taxon>
        <taxon>Pseudomonadati</taxon>
        <taxon>Pseudomonadota</taxon>
        <taxon>Gammaproteobacteria</taxon>
        <taxon>Alteromonadales</taxon>
        <taxon>Shewanellaceae</taxon>
        <taxon>Shewanella</taxon>
    </lineage>
</organism>
<accession>P0DXD6</accession>
<sequence>MNLATNRALLKPFTQAEFPTLEAAAHPHVPAHLMPEYWQAANRHLVKKILCEFTHEKIISPQIYRQAAGINHYELRLKDCTYYFSARHYQLDHLEIEAGSIRVSSAGQDKPLDAMSLIIKLKDALGMSETLLPTYLEEITSTLYSKAYKLAHQAIPATTLAKADYQTIEAGMTEGHPVFIANNGRIGFDMQDYDQFAPESASALQLVWIAVRKDKTTFSSLEGLDHDSLLKQELGEQFTKFQQHLSALGQAADSFYFMPVHPWQWREKIARTFAGEIARGDIIYLGESQDCYQVQQSIRTFFNLSAPQKCYVKTALSILNMGFMRGLSPLYMSCTPQINAWVADLIESDSYFAEQGFVILKEIAAIGYHHRYYEEALTQDSAYKKMLSALWRESPLPHIEPQQTLMTMAALLHVDHQEQALLAALIKHSGLSAKEWVKRYLNLYLSPLLHAFFAYDLVFMPHGENLILVLDAGIPVKILMKDIGEEVAVLNGSEPLPQEVQRLAVELEEEMKLNYILLDIFDCIFRYLAPILDKQTEVSEAQFWELVADNVRDYQAQHPQLADKFAQYDLFKDSFVRTCLNRIQLNNNQQMIDLADREKNLRFAGGIDNPLAAFRQSHAFGNQKLKPKS</sequence>
<feature type="chain" id="PRO_0000460752" description="Putrebactin synthase">
    <location>
        <begin position="1"/>
        <end position="629"/>
    </location>
</feature>
<evidence type="ECO:0000269" key="1">
    <source>
    </source>
</evidence>
<evidence type="ECO:0000303" key="2">
    <source>
    </source>
</evidence>
<evidence type="ECO:0000305" key="3"/>
<evidence type="ECO:0000312" key="4">
    <source>
        <dbReference type="EMBL" id="ABI38530.1"/>
    </source>
</evidence>
<gene>
    <name evidence="2" type="primary">pubC</name>
    <name evidence="4" type="ordered locus">Shewmr4_1452</name>
</gene>
<keyword id="KW-0067">ATP-binding</keyword>
<keyword id="KW-0436">Ligase</keyword>
<keyword id="KW-0460">Magnesium</keyword>
<keyword id="KW-0547">Nucleotide-binding</keyword>